<gene>
    <name evidence="3" type="primary">SMG6</name>
    <name evidence="3" type="synonym">EST1A</name>
    <name evidence="3" type="synonym">KIAA0732</name>
</gene>
<feature type="chain" id="PRO_0000233088" description="Telomerase-binding protein EST1A">
    <location>
        <begin position="1"/>
        <end position="1419"/>
    </location>
</feature>
<feature type="domain" description="PINc">
    <location>
        <begin position="1246"/>
        <end position="1397"/>
    </location>
</feature>
<feature type="region of interest" description="Disordered" evidence="5">
    <location>
        <begin position="26"/>
        <end position="77"/>
    </location>
</feature>
<feature type="region of interest" description="EJC-binding motif 1; mediates interaction with the EJC" evidence="1">
    <location>
        <begin position="39"/>
        <end position="59"/>
    </location>
</feature>
<feature type="region of interest" description="Disordered" evidence="5">
    <location>
        <begin position="99"/>
        <end position="167"/>
    </location>
</feature>
<feature type="region of interest" description="EJC-binding motif 2; mediates interaction with the EJC" evidence="1">
    <location>
        <begin position="133"/>
        <end position="153"/>
    </location>
</feature>
<feature type="region of interest" description="Disordered" evidence="5">
    <location>
        <begin position="179"/>
        <end position="405"/>
    </location>
</feature>
<feature type="region of interest" description="Disordered" evidence="5">
    <location>
        <begin position="419"/>
        <end position="470"/>
    </location>
</feature>
<feature type="region of interest" description="Disordered" evidence="5">
    <location>
        <begin position="854"/>
        <end position="883"/>
    </location>
</feature>
<feature type="coiled-coil region" evidence="4">
    <location>
        <begin position="166"/>
        <end position="190"/>
    </location>
</feature>
<feature type="coiled-coil region" evidence="4">
    <location>
        <begin position="575"/>
        <end position="600"/>
    </location>
</feature>
<feature type="compositionally biased region" description="Basic and acidic residues" evidence="5">
    <location>
        <begin position="30"/>
        <end position="51"/>
    </location>
</feature>
<feature type="compositionally biased region" description="Basic and acidic residues" evidence="5">
    <location>
        <begin position="64"/>
        <end position="77"/>
    </location>
</feature>
<feature type="compositionally biased region" description="Basic and acidic residues" evidence="5">
    <location>
        <begin position="182"/>
        <end position="231"/>
    </location>
</feature>
<feature type="compositionally biased region" description="Low complexity" evidence="5">
    <location>
        <begin position="258"/>
        <end position="272"/>
    </location>
</feature>
<feature type="compositionally biased region" description="Basic residues" evidence="5">
    <location>
        <begin position="279"/>
        <end position="294"/>
    </location>
</feature>
<feature type="compositionally biased region" description="Acidic residues" evidence="5">
    <location>
        <begin position="303"/>
        <end position="314"/>
    </location>
</feature>
<feature type="compositionally biased region" description="Basic and acidic residues" evidence="5">
    <location>
        <begin position="328"/>
        <end position="348"/>
    </location>
</feature>
<feature type="compositionally biased region" description="Basic and acidic residues" evidence="5">
    <location>
        <begin position="368"/>
        <end position="380"/>
    </location>
</feature>
<feature type="compositionally biased region" description="Basic and acidic residues" evidence="5">
    <location>
        <begin position="388"/>
        <end position="403"/>
    </location>
</feature>
<feature type="binding site" evidence="1">
    <location>
        <position position="1251"/>
    </location>
    <ligand>
        <name>Mn(2+)</name>
        <dbReference type="ChEBI" id="CHEBI:29035"/>
        <note>catalytic</note>
    </ligand>
</feature>
<feature type="binding site" evidence="1">
    <location>
        <position position="1353"/>
    </location>
    <ligand>
        <name>Mn(2+)</name>
        <dbReference type="ChEBI" id="CHEBI:29035"/>
        <note>catalytic</note>
    </ligand>
</feature>
<feature type="binding site" evidence="1">
    <location>
        <position position="1392"/>
    </location>
    <ligand>
        <name>Mn(2+)</name>
        <dbReference type="ChEBI" id="CHEBI:29035"/>
        <note>catalytic</note>
    </ligand>
</feature>
<feature type="modified residue" description="Phosphoserine" evidence="3">
    <location>
        <position position="203"/>
    </location>
</feature>
<feature type="modified residue" description="Phosphoserine" evidence="2">
    <location>
        <position position="332"/>
    </location>
</feature>
<feature type="modified residue" description="Omega-N-methylarginine" evidence="2">
    <location>
        <position position="406"/>
    </location>
</feature>
<feature type="modified residue" description="Omega-N-methylarginine" evidence="2">
    <location>
        <position position="433"/>
    </location>
</feature>
<feature type="modified residue" description="Phosphothreonine" evidence="2">
    <location>
        <position position="471"/>
    </location>
</feature>
<feature type="modified residue" description="Phosphothreonine" evidence="3">
    <location>
        <position position="479"/>
    </location>
</feature>
<feature type="modified residue" description="Phosphoserine" evidence="3">
    <location>
        <position position="484"/>
    </location>
</feature>
<feature type="modified residue" description="Phosphoserine" evidence="3">
    <location>
        <position position="831"/>
    </location>
</feature>
<feature type="modified residue" description="Phosphoserine" evidence="3">
    <location>
        <position position="870"/>
    </location>
</feature>
<feature type="modified residue" description="Phosphoserine" evidence="3">
    <location>
        <position position="874"/>
    </location>
</feature>
<keyword id="KW-0158">Chromosome</keyword>
<keyword id="KW-0175">Coiled coil</keyword>
<keyword id="KW-0963">Cytoplasm</keyword>
<keyword id="KW-0238">DNA-binding</keyword>
<keyword id="KW-0255">Endonuclease</keyword>
<keyword id="KW-0378">Hydrolase</keyword>
<keyword id="KW-0464">Manganese</keyword>
<keyword id="KW-0479">Metal-binding</keyword>
<keyword id="KW-0488">Methylation</keyword>
<keyword id="KW-0866">Nonsense-mediated mRNA decay</keyword>
<keyword id="KW-0540">Nuclease</keyword>
<keyword id="KW-0539">Nucleus</keyword>
<keyword id="KW-0597">Phosphoprotein</keyword>
<keyword id="KW-1185">Reference proteome</keyword>
<keyword id="KW-0779">Telomere</keyword>
<name>EST1A_PONAB</name>
<protein>
    <recommendedName>
        <fullName evidence="6">Telomerase-binding protein EST1A</fullName>
        <ecNumber>3.1.-.-</ecNumber>
    </recommendedName>
    <alternativeName>
        <fullName evidence="3">Ever shorter telomeres 1A</fullName>
    </alternativeName>
    <alternativeName>
        <fullName evidence="3">Nonsense mediated mRNA decay factor SMG6</fullName>
    </alternativeName>
    <alternativeName>
        <fullName evidence="3">Smg-6 homolog</fullName>
    </alternativeName>
</protein>
<organism>
    <name type="scientific">Pongo abelii</name>
    <name type="common">Sumatran orangutan</name>
    <name type="synonym">Pongo pygmaeus abelii</name>
    <dbReference type="NCBI Taxonomy" id="9601"/>
    <lineage>
        <taxon>Eukaryota</taxon>
        <taxon>Metazoa</taxon>
        <taxon>Chordata</taxon>
        <taxon>Craniata</taxon>
        <taxon>Vertebrata</taxon>
        <taxon>Euteleostomi</taxon>
        <taxon>Mammalia</taxon>
        <taxon>Eutheria</taxon>
        <taxon>Euarchontoglires</taxon>
        <taxon>Primates</taxon>
        <taxon>Haplorrhini</taxon>
        <taxon>Catarrhini</taxon>
        <taxon>Hominidae</taxon>
        <taxon>Pongo</taxon>
    </lineage>
</organism>
<accession>Q5RAK6</accession>
<reference key="1">
    <citation type="submission" date="2004-11" db="EMBL/GenBank/DDBJ databases">
        <authorList>
            <consortium name="The German cDNA consortium"/>
        </authorList>
    </citation>
    <scope>NUCLEOTIDE SEQUENCE [LARGE SCALE MRNA]</scope>
    <source>
        <tissue>Kidney</tissue>
    </source>
</reference>
<dbReference type="EC" id="3.1.-.-"/>
<dbReference type="EMBL" id="CR859009">
    <property type="protein sequence ID" value="CAH91204.1"/>
    <property type="molecule type" value="mRNA"/>
</dbReference>
<dbReference type="RefSeq" id="NP_001125708.1">
    <property type="nucleotide sequence ID" value="NM_001132236.2"/>
</dbReference>
<dbReference type="SMR" id="Q5RAK6"/>
<dbReference type="FunCoup" id="Q5RAK6">
    <property type="interactions" value="4227"/>
</dbReference>
<dbReference type="STRING" id="9601.ENSPPYP00000008776"/>
<dbReference type="GeneID" id="100172632"/>
<dbReference type="KEGG" id="pon:100172632"/>
<dbReference type="CTD" id="23293"/>
<dbReference type="eggNOG" id="KOG2162">
    <property type="taxonomic scope" value="Eukaryota"/>
</dbReference>
<dbReference type="InParanoid" id="Q5RAK6"/>
<dbReference type="OrthoDB" id="2017974at2759"/>
<dbReference type="Proteomes" id="UP000001595">
    <property type="component" value="Unplaced"/>
</dbReference>
<dbReference type="GO" id="GO:0000781">
    <property type="term" value="C:chromosome, telomeric region"/>
    <property type="evidence" value="ECO:0007669"/>
    <property type="project" value="UniProtKB-SubCell"/>
</dbReference>
<dbReference type="GO" id="GO:0005829">
    <property type="term" value="C:cytosol"/>
    <property type="evidence" value="ECO:0000250"/>
    <property type="project" value="UniProtKB"/>
</dbReference>
<dbReference type="GO" id="GO:0005730">
    <property type="term" value="C:nucleolus"/>
    <property type="evidence" value="ECO:0007669"/>
    <property type="project" value="UniProtKB-SubCell"/>
</dbReference>
<dbReference type="GO" id="GO:0005697">
    <property type="term" value="C:telomerase holoenzyme complex"/>
    <property type="evidence" value="ECO:0007669"/>
    <property type="project" value="TreeGrafter"/>
</dbReference>
<dbReference type="GO" id="GO:0046872">
    <property type="term" value="F:metal ion binding"/>
    <property type="evidence" value="ECO:0007669"/>
    <property type="project" value="UniProtKB-KW"/>
</dbReference>
<dbReference type="GO" id="GO:0004521">
    <property type="term" value="F:RNA endonuclease activity"/>
    <property type="evidence" value="ECO:0000250"/>
    <property type="project" value="UniProtKB"/>
</dbReference>
<dbReference type="GO" id="GO:0070034">
    <property type="term" value="F:telomerase RNA binding"/>
    <property type="evidence" value="ECO:0007669"/>
    <property type="project" value="TreeGrafter"/>
</dbReference>
<dbReference type="GO" id="GO:0042162">
    <property type="term" value="F:telomeric DNA binding"/>
    <property type="evidence" value="ECO:0007669"/>
    <property type="project" value="TreeGrafter"/>
</dbReference>
<dbReference type="GO" id="GO:0000184">
    <property type="term" value="P:nuclear-transcribed mRNA catabolic process, nonsense-mediated decay"/>
    <property type="evidence" value="ECO:0000250"/>
    <property type="project" value="UniProtKB"/>
</dbReference>
<dbReference type="CDD" id="cd09885">
    <property type="entry name" value="PIN_Smg6-like"/>
    <property type="match status" value="1"/>
</dbReference>
<dbReference type="FunFam" id="1.25.40.10:FF:000094">
    <property type="entry name" value="telomerase-binding protein EST1A isoform X1"/>
    <property type="match status" value="1"/>
</dbReference>
<dbReference type="FunFam" id="3.40.50.1010:FF:000014">
    <property type="entry name" value="telomerase-binding protein EST1A isoform X1"/>
    <property type="match status" value="1"/>
</dbReference>
<dbReference type="Gene3D" id="3.40.50.1010">
    <property type="entry name" value="5'-nuclease"/>
    <property type="match status" value="1"/>
</dbReference>
<dbReference type="Gene3D" id="1.25.40.10">
    <property type="entry name" value="Tetratricopeptide repeat domain"/>
    <property type="match status" value="1"/>
</dbReference>
<dbReference type="InterPro" id="IPR018834">
    <property type="entry name" value="DNA/RNA-bd_Est1-type"/>
</dbReference>
<dbReference type="InterPro" id="IPR019458">
    <property type="entry name" value="Est1-like_N"/>
</dbReference>
<dbReference type="InterPro" id="IPR045153">
    <property type="entry name" value="Est1/Ebs1-like"/>
</dbReference>
<dbReference type="InterPro" id="IPR029060">
    <property type="entry name" value="PIN-like_dom_sf"/>
</dbReference>
<dbReference type="InterPro" id="IPR002716">
    <property type="entry name" value="PIN_dom"/>
</dbReference>
<dbReference type="InterPro" id="IPR011990">
    <property type="entry name" value="TPR-like_helical_dom_sf"/>
</dbReference>
<dbReference type="PANTHER" id="PTHR15696">
    <property type="entry name" value="SMG-7 SUPPRESSOR WITH MORPHOLOGICAL EFFECT ON GENITALIA PROTEIN 7"/>
    <property type="match status" value="1"/>
</dbReference>
<dbReference type="PANTHER" id="PTHR15696:SF0">
    <property type="entry name" value="TELOMERASE-BINDING PROTEIN EST1A"/>
    <property type="match status" value="1"/>
</dbReference>
<dbReference type="Pfam" id="PF10374">
    <property type="entry name" value="EST1"/>
    <property type="match status" value="1"/>
</dbReference>
<dbReference type="Pfam" id="PF10373">
    <property type="entry name" value="EST1_DNA_bind"/>
    <property type="match status" value="1"/>
</dbReference>
<dbReference type="Pfam" id="PF13638">
    <property type="entry name" value="PIN_4"/>
    <property type="match status" value="1"/>
</dbReference>
<dbReference type="SMART" id="SM00670">
    <property type="entry name" value="PINc"/>
    <property type="match status" value="1"/>
</dbReference>
<dbReference type="SUPFAM" id="SSF88723">
    <property type="entry name" value="PIN domain-like"/>
    <property type="match status" value="1"/>
</dbReference>
<dbReference type="SUPFAM" id="SSF48452">
    <property type="entry name" value="TPR-like"/>
    <property type="match status" value="1"/>
</dbReference>
<evidence type="ECO:0000250" key="1"/>
<evidence type="ECO:0000250" key="2">
    <source>
        <dbReference type="UniProtKB" id="P61406"/>
    </source>
</evidence>
<evidence type="ECO:0000250" key="3">
    <source>
        <dbReference type="UniProtKB" id="Q86US8"/>
    </source>
</evidence>
<evidence type="ECO:0000255" key="4"/>
<evidence type="ECO:0000256" key="5">
    <source>
        <dbReference type="SAM" id="MobiDB-lite"/>
    </source>
</evidence>
<evidence type="ECO:0000305" key="6"/>
<proteinExistence type="evidence at transcript level"/>
<comment type="function">
    <text evidence="3">Component of the telomerase ribonucleoprotein (RNP) complex that is essential for the replication of chromosome termini. May have a general role in telomere regulation. Promotes in vitro the ability of TERT to elongate telomeres. Overexpression induces telomere uncapping, chromosomal end-to-end fusions (telomeric DNA persists at the fusion points) and did not perturb TRF2 telomeric localization. Binds to the single-stranded 5'-(GTGTGG)(4)GTGT-3' telomeric DNA, but not to a telomerase RNA template component (TER).</text>
</comment>
<comment type="function">
    <text evidence="3">Plays a role in nonsense-mediated mRNA decay. Is thought to provide a link to the mRNA degradation machinery as it has endonuclease activity required to initiate NMD, and to serve as an adapter for UPF1 to protein phosphatase 2A (PP2A), thereby triggering UPF1 dephosphorylation. Degrades single-stranded RNA (ssRNA), but not ssDNA or dsRNA.</text>
</comment>
<comment type="cofactor">
    <cofactor>
        <name>Mn(2+)</name>
        <dbReference type="ChEBI" id="CHEBI:29035"/>
    </cofactor>
</comment>
<comment type="subunit">
    <text evidence="3">May form homooligomers. Associated component of the telomerase holoenzyme complex. Interacts with TERT, independently of the telomerase RNA. Interacts with SMG1, SMG5, SMG7, UPF1, UPF2, UPF3B and the PP2A catalytic subunits. Also interacts with the exon junction complex (EJC) composed at least of CASC3, EIF4A3, MAGOH and RBM8A; required for the process of nonsense-mediated mRNA decay. Interacts with DHX34; the interaction is RNA-independent (By similarity).</text>
</comment>
<comment type="subcellular location">
    <subcellularLocation>
        <location evidence="3">Nucleus</location>
        <location evidence="3">Nucleolus</location>
    </subcellularLocation>
    <subcellularLocation>
        <location evidence="3">Chromosome</location>
        <location evidence="3">Telomere</location>
    </subcellularLocation>
    <subcellularLocation>
        <location evidence="3">Cytoplasm</location>
        <location evidence="3">Cytosol</location>
    </subcellularLocation>
    <text evidence="3">Particularly enriched in the nucleolus.</text>
</comment>
<comment type="domain">
    <text evidence="3">The PINc domain confers endonuclease activity and is expected to bind the catalytic metal ion.</text>
</comment>
<sequence length="1419" mass="160801">MAEGLERVRISASELRGILATLAPQAGSRENMKELKEARPRKDNRRPDLEIYKPGLSRLRNKPKIKEPSGSEEFKDEIVNDRDCSAVENGTQPFKDVCKELNNQQQNGPIDPENNRGQESFPRTAGQEDRSLKMIKRTKKPDLQIYQPGRRLQTVSKESASRVEEEEILNQVEQLRVEEDECRGNVVKEEVVNKPDRAEIEKSPGGDRVRAAKGEKGKRIEKGEGMRKTNDDPAQGKPGSAKRYSRSDKRRNRYRTCSTSSAGSNNSAEGAGLTDNGCRRRRQDRTKERPRLKKQVSVSSTDSLDEDRIDEPDGLEPRRSSERKKHLERNWSGRGEGEQKSNGKENRGTLRVTFDAEAMNKESPMVRSARDDMDRGKPDKGLSSGGKGSEKQESKNPKQELRGRGRGILILPAHTTLSVNSAGSPESAPLGPRLLFGSGSKGPRSWGRGGTTRRLWDPNNPDQKPALKTQTPQLHFLDTDDEVSPTSWGDSRQAQASYYKFQNSDNPYYYPRTPGPASQYPYTGYNPLQYPVGPTNGVYPGPYYPGYPTPSGPYVCSPLPASTMSPEEVEQHMRNLQQQELHRLLRVADNQELQLSNLLSRDRISPEGLEKMAQLRAELLQLYERCILLDIEFSDNQNVDQILWKNAFYQVIEKFRQLVKDPNVENPEQIRNRLLELLDEGSDFFDSLLQKLQVTYKFKLEDYIDGLAIRSKPLRKTVKYALISAQRCMICQGDIARYREQARDTANYGKARSWYLKAQHIAPKNGRPYNQLALLAVYTRRKLDAVYYYMRSLAASNPILTAKESLMSLFEETKRKAEQMEKKQHEEFELSPDQWRKGKKSTFRHVGDDTTRLEIWIHPSHPRSSQGTESGKDSEQENGLGSLSPSDLNKRFILSFLHAHGKLFTRIGMETFPAVAEKVLKEFQVLLQHSPSPIGSTRMLQLMTINMFAVHNSQLKDCFSEECRSVIQEQAAALGLAMFSLLVCRCTYLLKESAKAQLSSPEDQDDQDDIKVSSFVPDLKELLPSVKVWSDWMLGYPDTWNPPPTSLDLPSHVAVDVWSTLADFCNILTAVNQSEVPLYKDPDDDLTLLILEEDRLLSGFVPLLAAPQDPCYVEKTSDKVIAADCKRVTVLKYFLEALCGQEEPLLAFKDGKYVSVAPAPDTMGKEMVSQEGTRLEDEEEDVVIEDFEEDSEAEGSGGEDDIRELRAKKLALARKIAEQQRRQEKIQAVLEDHSQMRQMELEIRPLFLVPDTNGFIDHLASLARLLESRKYILVVPLIVINELDGLAKGQETDHRAGGYARVVQEKARKSIEFLEQRFESRDSCLRALTSRGNELESIAFRSEDITGQLGNNDDLILSCCLHYCKDKAKDFMPTSKEEPIRLLREVVLLTDDRNLRVKALTRNVPVRDIPAFLTWAQVG</sequence>